<dbReference type="EC" id="2.7.1.33" evidence="1"/>
<dbReference type="EMBL" id="AM398681">
    <property type="protein sequence ID" value="CAL44488.1"/>
    <property type="molecule type" value="Genomic_DNA"/>
</dbReference>
<dbReference type="RefSeq" id="WP_011964522.1">
    <property type="nucleotide sequence ID" value="NC_009613.3"/>
</dbReference>
<dbReference type="RefSeq" id="YP_001297289.1">
    <property type="nucleotide sequence ID" value="NC_009613.3"/>
</dbReference>
<dbReference type="SMR" id="A6H2B4"/>
<dbReference type="STRING" id="402612.FP2434"/>
<dbReference type="EnsemblBacteria" id="CAL44488">
    <property type="protein sequence ID" value="CAL44488"/>
    <property type="gene ID" value="FP2434"/>
</dbReference>
<dbReference type="KEGG" id="fps:FP2434"/>
<dbReference type="PATRIC" id="fig|402612.5.peg.2491"/>
<dbReference type="eggNOG" id="COG1521">
    <property type="taxonomic scope" value="Bacteria"/>
</dbReference>
<dbReference type="HOGENOM" id="CLU_066627_2_0_10"/>
<dbReference type="OrthoDB" id="9804707at2"/>
<dbReference type="UniPathway" id="UPA00241">
    <property type="reaction ID" value="UER00352"/>
</dbReference>
<dbReference type="Proteomes" id="UP000006394">
    <property type="component" value="Chromosome"/>
</dbReference>
<dbReference type="GO" id="GO:0005737">
    <property type="term" value="C:cytoplasm"/>
    <property type="evidence" value="ECO:0007669"/>
    <property type="project" value="UniProtKB-SubCell"/>
</dbReference>
<dbReference type="GO" id="GO:0005524">
    <property type="term" value="F:ATP binding"/>
    <property type="evidence" value="ECO:0007669"/>
    <property type="project" value="UniProtKB-UniRule"/>
</dbReference>
<dbReference type="GO" id="GO:0046872">
    <property type="term" value="F:metal ion binding"/>
    <property type="evidence" value="ECO:0007669"/>
    <property type="project" value="UniProtKB-KW"/>
</dbReference>
<dbReference type="GO" id="GO:0004594">
    <property type="term" value="F:pantothenate kinase activity"/>
    <property type="evidence" value="ECO:0007669"/>
    <property type="project" value="UniProtKB-UniRule"/>
</dbReference>
<dbReference type="GO" id="GO:0015937">
    <property type="term" value="P:coenzyme A biosynthetic process"/>
    <property type="evidence" value="ECO:0007669"/>
    <property type="project" value="UniProtKB-UniRule"/>
</dbReference>
<dbReference type="CDD" id="cd24015">
    <property type="entry name" value="ASKHA_NBD_PanK-III"/>
    <property type="match status" value="1"/>
</dbReference>
<dbReference type="Gene3D" id="3.30.420.40">
    <property type="match status" value="2"/>
</dbReference>
<dbReference type="HAMAP" id="MF_01274">
    <property type="entry name" value="Pantothen_kinase_3"/>
    <property type="match status" value="1"/>
</dbReference>
<dbReference type="InterPro" id="IPR043129">
    <property type="entry name" value="ATPase_NBD"/>
</dbReference>
<dbReference type="InterPro" id="IPR004619">
    <property type="entry name" value="Type_III_PanK"/>
</dbReference>
<dbReference type="NCBIfam" id="TIGR00671">
    <property type="entry name" value="baf"/>
    <property type="match status" value="1"/>
</dbReference>
<dbReference type="NCBIfam" id="NF009853">
    <property type="entry name" value="PRK13320.1-5"/>
    <property type="match status" value="1"/>
</dbReference>
<dbReference type="PANTHER" id="PTHR34265">
    <property type="entry name" value="TYPE III PANTOTHENATE KINASE"/>
    <property type="match status" value="1"/>
</dbReference>
<dbReference type="PANTHER" id="PTHR34265:SF1">
    <property type="entry name" value="TYPE III PANTOTHENATE KINASE"/>
    <property type="match status" value="1"/>
</dbReference>
<dbReference type="Pfam" id="PF03309">
    <property type="entry name" value="Pan_kinase"/>
    <property type="match status" value="1"/>
</dbReference>
<dbReference type="SUPFAM" id="SSF53067">
    <property type="entry name" value="Actin-like ATPase domain"/>
    <property type="match status" value="2"/>
</dbReference>
<proteinExistence type="inferred from homology"/>
<accession>A6H2B4</accession>
<gene>
    <name evidence="1" type="primary">coaX</name>
    <name type="ordered locus">FP2434</name>
</gene>
<organism>
    <name type="scientific">Flavobacterium psychrophilum (strain ATCC 49511 / DSM 21280 / CIP 103535 / JIP02/86)</name>
    <dbReference type="NCBI Taxonomy" id="402612"/>
    <lineage>
        <taxon>Bacteria</taxon>
        <taxon>Pseudomonadati</taxon>
        <taxon>Bacteroidota</taxon>
        <taxon>Flavobacteriia</taxon>
        <taxon>Flavobacteriales</taxon>
        <taxon>Flavobacteriaceae</taxon>
        <taxon>Flavobacterium</taxon>
    </lineage>
</organism>
<sequence>MILTIDVGNTRIKSAVFKYNTIIETAFFSNKNFQSEIENILNLNNKIKVLVVASVGKLEKEAFELFSNRVYVCFISRESTFPFQNNYATQSTLGIDRMVLSAGAVFQFPKKNRLIIDAGTCLTYDFVDENDVYQGGAISPGIRLRYEVMHNYTAKLPLLTLQEPQSLIGNTTNQSLHSGVVNGLTFEIEGYIEAVRGKNENFIIILTGGDANFLAKRLKNTIFANSNFLLESLNNLYQYQK</sequence>
<feature type="chain" id="PRO_1000067388" description="Type III pantothenate kinase">
    <location>
        <begin position="1"/>
        <end position="241"/>
    </location>
</feature>
<feature type="active site" description="Proton acceptor" evidence="1">
    <location>
        <position position="96"/>
    </location>
</feature>
<feature type="binding site" evidence="1">
    <location>
        <begin position="6"/>
        <end position="13"/>
    </location>
    <ligand>
        <name>ATP</name>
        <dbReference type="ChEBI" id="CHEBI:30616"/>
    </ligand>
</feature>
<feature type="binding site" evidence="1">
    <location>
        <begin position="94"/>
        <end position="97"/>
    </location>
    <ligand>
        <name>substrate</name>
    </ligand>
</feature>
<feature type="binding site" evidence="1">
    <location>
        <position position="117"/>
    </location>
    <ligand>
        <name>K(+)</name>
        <dbReference type="ChEBI" id="CHEBI:29103"/>
    </ligand>
</feature>
<feature type="binding site" evidence="1">
    <location>
        <position position="120"/>
    </location>
    <ligand>
        <name>ATP</name>
        <dbReference type="ChEBI" id="CHEBI:30616"/>
    </ligand>
</feature>
<feature type="binding site" evidence="1">
    <location>
        <position position="172"/>
    </location>
    <ligand>
        <name>substrate</name>
    </ligand>
</feature>
<comment type="function">
    <text evidence="1">Catalyzes the phosphorylation of pantothenate (Pan), the first step in CoA biosynthesis.</text>
</comment>
<comment type="catalytic activity">
    <reaction evidence="1">
        <text>(R)-pantothenate + ATP = (R)-4'-phosphopantothenate + ADP + H(+)</text>
        <dbReference type="Rhea" id="RHEA:16373"/>
        <dbReference type="ChEBI" id="CHEBI:10986"/>
        <dbReference type="ChEBI" id="CHEBI:15378"/>
        <dbReference type="ChEBI" id="CHEBI:29032"/>
        <dbReference type="ChEBI" id="CHEBI:30616"/>
        <dbReference type="ChEBI" id="CHEBI:456216"/>
        <dbReference type="EC" id="2.7.1.33"/>
    </reaction>
</comment>
<comment type="cofactor">
    <cofactor evidence="1">
        <name>NH4(+)</name>
        <dbReference type="ChEBI" id="CHEBI:28938"/>
    </cofactor>
    <cofactor evidence="1">
        <name>K(+)</name>
        <dbReference type="ChEBI" id="CHEBI:29103"/>
    </cofactor>
    <text evidence="1">A monovalent cation. Ammonium or potassium.</text>
</comment>
<comment type="pathway">
    <text evidence="1">Cofactor biosynthesis; coenzyme A biosynthesis; CoA from (R)-pantothenate: step 1/5.</text>
</comment>
<comment type="subunit">
    <text evidence="1">Homodimer.</text>
</comment>
<comment type="subcellular location">
    <subcellularLocation>
        <location evidence="1">Cytoplasm</location>
    </subcellularLocation>
</comment>
<comment type="similarity">
    <text evidence="1">Belongs to the type III pantothenate kinase family.</text>
</comment>
<evidence type="ECO:0000255" key="1">
    <source>
        <dbReference type="HAMAP-Rule" id="MF_01274"/>
    </source>
</evidence>
<name>COAX_FLAPJ</name>
<protein>
    <recommendedName>
        <fullName evidence="1">Type III pantothenate kinase</fullName>
        <ecNumber evidence="1">2.7.1.33</ecNumber>
    </recommendedName>
    <alternativeName>
        <fullName evidence="1">PanK-III</fullName>
    </alternativeName>
    <alternativeName>
        <fullName evidence="1">Pantothenic acid kinase</fullName>
    </alternativeName>
</protein>
<reference key="1">
    <citation type="journal article" date="2007" name="Nat. Biotechnol.">
        <title>Complete genome sequence of the fish pathogen Flavobacterium psychrophilum.</title>
        <authorList>
            <person name="Duchaud E."/>
            <person name="Boussaha M."/>
            <person name="Loux V."/>
            <person name="Bernardet J.-F."/>
            <person name="Michel C."/>
            <person name="Kerouault B."/>
            <person name="Mondot S."/>
            <person name="Nicolas P."/>
            <person name="Bossy R."/>
            <person name="Caron C."/>
            <person name="Bessieres P."/>
            <person name="Gibrat J.-F."/>
            <person name="Claverol S."/>
            <person name="Dumetz F."/>
            <person name="Le Henaff M."/>
            <person name="Benmansour A."/>
        </authorList>
    </citation>
    <scope>NUCLEOTIDE SEQUENCE [LARGE SCALE GENOMIC DNA]</scope>
    <source>
        <strain>ATCC 49511 / DSM 21280 / CIP 103535 / JIP02/86</strain>
    </source>
</reference>
<keyword id="KW-0067">ATP-binding</keyword>
<keyword id="KW-0173">Coenzyme A biosynthesis</keyword>
<keyword id="KW-0963">Cytoplasm</keyword>
<keyword id="KW-0418">Kinase</keyword>
<keyword id="KW-0479">Metal-binding</keyword>
<keyword id="KW-0547">Nucleotide-binding</keyword>
<keyword id="KW-0630">Potassium</keyword>
<keyword id="KW-1185">Reference proteome</keyword>
<keyword id="KW-0808">Transferase</keyword>